<dbReference type="EC" id="2.9.1.1" evidence="1"/>
<dbReference type="EMBL" id="CP000962">
    <property type="protein sequence ID" value="ACA56313.1"/>
    <property type="molecule type" value="Genomic_DNA"/>
</dbReference>
<dbReference type="RefSeq" id="WP_012344200.1">
    <property type="nucleotide sequence ID" value="NC_010520.1"/>
</dbReference>
<dbReference type="SMR" id="B1KZQ3"/>
<dbReference type="KEGG" id="cbl:CLK_2360"/>
<dbReference type="HOGENOM" id="CLU_038142_1_0_9"/>
<dbReference type="UniPathway" id="UPA00906">
    <property type="reaction ID" value="UER00896"/>
</dbReference>
<dbReference type="GO" id="GO:0005737">
    <property type="term" value="C:cytoplasm"/>
    <property type="evidence" value="ECO:0007669"/>
    <property type="project" value="UniProtKB-SubCell"/>
</dbReference>
<dbReference type="GO" id="GO:0004125">
    <property type="term" value="F:L-seryl-tRNA(Sec) selenium transferase activity"/>
    <property type="evidence" value="ECO:0007669"/>
    <property type="project" value="UniProtKB-UniRule"/>
</dbReference>
<dbReference type="GO" id="GO:0001717">
    <property type="term" value="P:conversion of seryl-tRNAsec to selenocys-tRNAsec"/>
    <property type="evidence" value="ECO:0007669"/>
    <property type="project" value="UniProtKB-UniRule"/>
</dbReference>
<dbReference type="GO" id="GO:0001514">
    <property type="term" value="P:selenocysteine incorporation"/>
    <property type="evidence" value="ECO:0007669"/>
    <property type="project" value="UniProtKB-UniRule"/>
</dbReference>
<dbReference type="FunFam" id="3.40.640.10:FF:000028">
    <property type="entry name" value="L-seryl-tRNA(Sec) selenium transferase"/>
    <property type="match status" value="1"/>
</dbReference>
<dbReference type="Gene3D" id="3.90.1150.180">
    <property type="match status" value="1"/>
</dbReference>
<dbReference type="Gene3D" id="3.40.640.10">
    <property type="entry name" value="Type I PLP-dependent aspartate aminotransferase-like (Major domain)"/>
    <property type="match status" value="1"/>
</dbReference>
<dbReference type="HAMAP" id="MF_00423">
    <property type="entry name" value="SelA"/>
    <property type="match status" value="1"/>
</dbReference>
<dbReference type="InterPro" id="IPR015424">
    <property type="entry name" value="PyrdxlP-dep_Trfase"/>
</dbReference>
<dbReference type="InterPro" id="IPR015421">
    <property type="entry name" value="PyrdxlP-dep_Trfase_major"/>
</dbReference>
<dbReference type="InterPro" id="IPR018319">
    <property type="entry name" value="SelA-like"/>
</dbReference>
<dbReference type="InterPro" id="IPR004534">
    <property type="entry name" value="SelA_trans"/>
</dbReference>
<dbReference type="InterPro" id="IPR025862">
    <property type="entry name" value="SelA_trans_N_dom"/>
</dbReference>
<dbReference type="NCBIfam" id="TIGR00474">
    <property type="entry name" value="selA"/>
    <property type="match status" value="1"/>
</dbReference>
<dbReference type="PANTHER" id="PTHR32328">
    <property type="entry name" value="L-SERYL-TRNA(SEC) SELENIUM TRANSFERASE"/>
    <property type="match status" value="1"/>
</dbReference>
<dbReference type="PANTHER" id="PTHR32328:SF0">
    <property type="entry name" value="L-SERYL-TRNA(SEC) SELENIUM TRANSFERASE"/>
    <property type="match status" value="1"/>
</dbReference>
<dbReference type="Pfam" id="PF12390">
    <property type="entry name" value="Se-cys_synth_N"/>
    <property type="match status" value="1"/>
</dbReference>
<dbReference type="Pfam" id="PF03841">
    <property type="entry name" value="SelA"/>
    <property type="match status" value="1"/>
</dbReference>
<dbReference type="SUPFAM" id="SSF53383">
    <property type="entry name" value="PLP-dependent transferases"/>
    <property type="match status" value="1"/>
</dbReference>
<evidence type="ECO:0000255" key="1">
    <source>
        <dbReference type="HAMAP-Rule" id="MF_00423"/>
    </source>
</evidence>
<keyword id="KW-0963">Cytoplasm</keyword>
<keyword id="KW-0648">Protein biosynthesis</keyword>
<keyword id="KW-0663">Pyridoxal phosphate</keyword>
<keyword id="KW-0711">Selenium</keyword>
<keyword id="KW-0808">Transferase</keyword>
<feature type="chain" id="PRO_1000124135" description="L-seryl-tRNA(Sec) selenium transferase">
    <location>
        <begin position="1"/>
        <end position="462"/>
    </location>
</feature>
<feature type="modified residue" description="N6-(pyridoxal phosphate)lysine" evidence="1">
    <location>
        <position position="293"/>
    </location>
</feature>
<sequence>MDKKQLLRNLPKIDELLKEEIINRYLQENSRTLVVDSLRESIDHYRGEILKNNIDSFTKENVVNYFIDTLEENKSTKFKKVINATGVVIHTNLGRSLLAKEAIENVVKVSENYSNLEYDLKEGKRGSRYSHVEELIKKVTGAEAAMVVNNNAAAVMLALNTLCEEREAIVSRGQLVEIGGSFRVPDVMKFSRAHLVEVGTTNRTHLYDYENNINENTGVLLKVHTSNFKIMGFTEEVSSEEMVQLGEKYKLPVMEDIGSGTLVDFSKYGFTYEPTVQSSLEKGVDVVTFSGDKMLGGPQAGIIVGKKKYIDKMKKNQLTRALRIDKMTLAALEGTLKCYIDEKEAIENIPTLNMILSSKDIHKKRAQRLKRRLQNNVKDFNFKVSEDLSMVGGGSMPGERIPTYVVKVNSDKITAEKIEEKLRLSKNPIIVRVSKDEVILDVRTLFERDFNIIVEEFKKLLK</sequence>
<comment type="function">
    <text evidence="1">Converts seryl-tRNA(Sec) to selenocysteinyl-tRNA(Sec) required for selenoprotein biosynthesis.</text>
</comment>
<comment type="catalytic activity">
    <reaction evidence="1">
        <text>L-seryl-tRNA(Sec) + selenophosphate + H(+) = L-selenocysteinyl-tRNA(Sec) + phosphate</text>
        <dbReference type="Rhea" id="RHEA:22728"/>
        <dbReference type="Rhea" id="RHEA-COMP:9742"/>
        <dbReference type="Rhea" id="RHEA-COMP:9743"/>
        <dbReference type="ChEBI" id="CHEBI:15378"/>
        <dbReference type="ChEBI" id="CHEBI:16144"/>
        <dbReference type="ChEBI" id="CHEBI:43474"/>
        <dbReference type="ChEBI" id="CHEBI:78533"/>
        <dbReference type="ChEBI" id="CHEBI:78573"/>
        <dbReference type="EC" id="2.9.1.1"/>
    </reaction>
</comment>
<comment type="cofactor">
    <cofactor evidence="1">
        <name>pyridoxal 5'-phosphate</name>
        <dbReference type="ChEBI" id="CHEBI:597326"/>
    </cofactor>
</comment>
<comment type="pathway">
    <text evidence="1">Aminoacyl-tRNA biosynthesis; selenocysteinyl-tRNA(Sec) biosynthesis; selenocysteinyl-tRNA(Sec) from L-seryl-tRNA(Sec) (bacterial route): step 1/1.</text>
</comment>
<comment type="subcellular location">
    <subcellularLocation>
        <location evidence="1">Cytoplasm</location>
    </subcellularLocation>
</comment>
<comment type="similarity">
    <text evidence="1">Belongs to the SelA family.</text>
</comment>
<protein>
    <recommendedName>
        <fullName evidence="1">L-seryl-tRNA(Sec) selenium transferase</fullName>
        <ecNumber evidence="1">2.9.1.1</ecNumber>
    </recommendedName>
    <alternativeName>
        <fullName evidence="1">Selenocysteine synthase</fullName>
        <shortName evidence="1">Sec synthase</shortName>
    </alternativeName>
    <alternativeName>
        <fullName evidence="1">Selenocysteinyl-tRNA(Sec) synthase</fullName>
    </alternativeName>
</protein>
<gene>
    <name evidence="1" type="primary">selA</name>
    <name type="ordered locus">CLK_2360</name>
</gene>
<accession>B1KZQ3</accession>
<name>SELA_CLOBM</name>
<organism>
    <name type="scientific">Clostridium botulinum (strain Loch Maree / Type A3)</name>
    <dbReference type="NCBI Taxonomy" id="498214"/>
    <lineage>
        <taxon>Bacteria</taxon>
        <taxon>Bacillati</taxon>
        <taxon>Bacillota</taxon>
        <taxon>Clostridia</taxon>
        <taxon>Eubacteriales</taxon>
        <taxon>Clostridiaceae</taxon>
        <taxon>Clostridium</taxon>
    </lineage>
</organism>
<proteinExistence type="inferred from homology"/>
<reference key="1">
    <citation type="journal article" date="2007" name="PLoS ONE">
        <title>Analysis of the neurotoxin complex genes in Clostridium botulinum A1-A4 and B1 strains: BoNT/A3, /Ba4 and /B1 clusters are located within plasmids.</title>
        <authorList>
            <person name="Smith T.J."/>
            <person name="Hill K.K."/>
            <person name="Foley B.T."/>
            <person name="Detter J.C."/>
            <person name="Munk A.C."/>
            <person name="Bruce D.C."/>
            <person name="Doggett N.A."/>
            <person name="Smith L.A."/>
            <person name="Marks J.D."/>
            <person name="Xie G."/>
            <person name="Brettin T.S."/>
        </authorList>
    </citation>
    <scope>NUCLEOTIDE SEQUENCE [LARGE SCALE GENOMIC DNA]</scope>
    <source>
        <strain>Loch Maree / Type A3</strain>
    </source>
</reference>